<proteinExistence type="inferred from homology"/>
<gene>
    <name type="primary">lsrD</name>
    <name type="ordered locus">SPA3919</name>
</gene>
<keyword id="KW-0997">Cell inner membrane</keyword>
<keyword id="KW-1003">Cell membrane</keyword>
<keyword id="KW-0472">Membrane</keyword>
<keyword id="KW-0812">Transmembrane</keyword>
<keyword id="KW-1133">Transmembrane helix</keyword>
<keyword id="KW-0813">Transport</keyword>
<protein>
    <recommendedName>
        <fullName>Autoinducer 2 import system permease protein LsrD</fullName>
        <shortName>AI-2 import system permease protein LsrD</shortName>
    </recommendedName>
</protein>
<accession>Q5PJE5</accession>
<sequence length="332" mass="35119">MNPWRRYSWEIALAALLIFEILAFGVINPRLLDINVLLFSTSDFICIGIVALPLTMVIVSGGMDISFGSTIGLCAITLGVLFQLGMPLPLAIIITLLLGAICGLINAGLIIYTGVNPLVITLGTMYLFGGSALLLSGMAGATGYEGIGGFPTAFTDFANISFLGIPMPLIFFLVCCLFFWLLMHRTHMGRNVFLIGQSARVAQYSAIPVNRTLYTVYAMTGCASAIAAVLLVSYFGSARSDLGASFLMPAITAVVLGGANIYGGSGSIMGSALAALLVGFLQQGLQMAGVPNQISSALSGALLIVVVVGRSVSLHRHQILEWYSRRRNAHQA</sequence>
<dbReference type="EMBL" id="CP000026">
    <property type="protein sequence ID" value="AAV79684.1"/>
    <property type="molecule type" value="Genomic_DNA"/>
</dbReference>
<dbReference type="KEGG" id="spt:SPA3919"/>
<dbReference type="HOGENOM" id="CLU_028880_0_0_6"/>
<dbReference type="Proteomes" id="UP000008185">
    <property type="component" value="Chromosome"/>
</dbReference>
<dbReference type="GO" id="GO:0005886">
    <property type="term" value="C:plasma membrane"/>
    <property type="evidence" value="ECO:0007669"/>
    <property type="project" value="UniProtKB-SubCell"/>
</dbReference>
<dbReference type="GO" id="GO:0022857">
    <property type="term" value="F:transmembrane transporter activity"/>
    <property type="evidence" value="ECO:0007669"/>
    <property type="project" value="InterPro"/>
</dbReference>
<dbReference type="CDD" id="cd06579">
    <property type="entry name" value="TM_PBP1_transp_AraH_like"/>
    <property type="match status" value="1"/>
</dbReference>
<dbReference type="InterPro" id="IPR001851">
    <property type="entry name" value="ABC_transp_permease"/>
</dbReference>
<dbReference type="NCBIfam" id="NF011612">
    <property type="entry name" value="PRK15038.1"/>
    <property type="match status" value="1"/>
</dbReference>
<dbReference type="PANTHER" id="PTHR32196">
    <property type="entry name" value="ABC TRANSPORTER PERMEASE PROTEIN YPHD-RELATED-RELATED"/>
    <property type="match status" value="1"/>
</dbReference>
<dbReference type="PANTHER" id="PTHR32196:SF71">
    <property type="entry name" value="AUTOINDUCER 2 IMPORT SYSTEM PERMEASE PROTEIN LSRD"/>
    <property type="match status" value="1"/>
</dbReference>
<dbReference type="Pfam" id="PF02653">
    <property type="entry name" value="BPD_transp_2"/>
    <property type="match status" value="1"/>
</dbReference>
<comment type="function">
    <text evidence="1">Part of the ABC transporter complex LsrABCD involved in autoinducer 2 (AI-2) import. Probably responsible for the translocation of the substrate across the membrane (By similarity).</text>
</comment>
<comment type="subunit">
    <text evidence="1">The complex is composed of two ATP-binding proteins (LsrA), two transmembrane proteins (LsrC and LsrD) and a solute-binding protein (LsrB).</text>
</comment>
<comment type="subcellular location">
    <subcellularLocation>
        <location evidence="1">Cell inner membrane</location>
        <topology evidence="1">Multi-pass membrane protein</topology>
    </subcellularLocation>
</comment>
<comment type="similarity">
    <text evidence="3">Belongs to the binding-protein-dependent transport system permease family. AraH/RbsC subfamily.</text>
</comment>
<organism>
    <name type="scientific">Salmonella paratyphi A (strain ATCC 9150 / SARB42)</name>
    <dbReference type="NCBI Taxonomy" id="295319"/>
    <lineage>
        <taxon>Bacteria</taxon>
        <taxon>Pseudomonadati</taxon>
        <taxon>Pseudomonadota</taxon>
        <taxon>Gammaproteobacteria</taxon>
        <taxon>Enterobacterales</taxon>
        <taxon>Enterobacteriaceae</taxon>
        <taxon>Salmonella</taxon>
    </lineage>
</organism>
<name>LSRD_SALPA</name>
<reference key="1">
    <citation type="journal article" date="2004" name="Nat. Genet.">
        <title>Comparison of genome degradation in Paratyphi A and Typhi, human-restricted serovars of Salmonella enterica that cause typhoid.</title>
        <authorList>
            <person name="McClelland M."/>
            <person name="Sanderson K.E."/>
            <person name="Clifton S.W."/>
            <person name="Latreille P."/>
            <person name="Porwollik S."/>
            <person name="Sabo A."/>
            <person name="Meyer R."/>
            <person name="Bieri T."/>
            <person name="Ozersky P."/>
            <person name="McLellan M."/>
            <person name="Harkins C.R."/>
            <person name="Wang C."/>
            <person name="Nguyen C."/>
            <person name="Berghoff A."/>
            <person name="Elliott G."/>
            <person name="Kohlberg S."/>
            <person name="Strong C."/>
            <person name="Du F."/>
            <person name="Carter J."/>
            <person name="Kremizki C."/>
            <person name="Layman D."/>
            <person name="Leonard S."/>
            <person name="Sun H."/>
            <person name="Fulton L."/>
            <person name="Nash W."/>
            <person name="Miner T."/>
            <person name="Minx P."/>
            <person name="Delehaunty K."/>
            <person name="Fronick C."/>
            <person name="Magrini V."/>
            <person name="Nhan M."/>
            <person name="Warren W."/>
            <person name="Florea L."/>
            <person name="Spieth J."/>
            <person name="Wilson R.K."/>
        </authorList>
    </citation>
    <scope>NUCLEOTIDE SEQUENCE [LARGE SCALE GENOMIC DNA]</scope>
    <source>
        <strain>ATCC 9150 / SARB42</strain>
    </source>
</reference>
<evidence type="ECO:0000250" key="1"/>
<evidence type="ECO:0000255" key="2"/>
<evidence type="ECO:0000305" key="3"/>
<feature type="chain" id="PRO_0000351374" description="Autoinducer 2 import system permease protein LsrD">
    <location>
        <begin position="1"/>
        <end position="332"/>
    </location>
</feature>
<feature type="transmembrane region" description="Helical" evidence="2">
    <location>
        <begin position="7"/>
        <end position="27"/>
    </location>
</feature>
<feature type="transmembrane region" description="Helical" evidence="2">
    <location>
        <begin position="45"/>
        <end position="65"/>
    </location>
</feature>
<feature type="transmembrane region" description="Helical" evidence="2">
    <location>
        <begin position="70"/>
        <end position="90"/>
    </location>
</feature>
<feature type="transmembrane region" description="Helical" evidence="2">
    <location>
        <begin position="91"/>
        <end position="111"/>
    </location>
</feature>
<feature type="transmembrane region" description="Helical" evidence="2">
    <location>
        <begin position="118"/>
        <end position="138"/>
    </location>
</feature>
<feature type="transmembrane region" description="Helical" evidence="2">
    <location>
        <begin position="162"/>
        <end position="182"/>
    </location>
</feature>
<feature type="transmembrane region" description="Helical" evidence="2">
    <location>
        <begin position="216"/>
        <end position="236"/>
    </location>
</feature>
<feature type="transmembrane region" description="Helical" evidence="2">
    <location>
        <begin position="240"/>
        <end position="260"/>
    </location>
</feature>
<feature type="transmembrane region" description="Helical" evidence="2">
    <location>
        <begin position="261"/>
        <end position="281"/>
    </location>
</feature>
<feature type="transmembrane region" description="Helical" evidence="2">
    <location>
        <begin position="288"/>
        <end position="308"/>
    </location>
</feature>